<gene>
    <name type="primary">nuo-51</name>
    <name type="ORF">B10H18.210</name>
    <name type="ORF">NCU04044</name>
</gene>
<evidence type="ECO:0000250" key="1"/>
<evidence type="ECO:0000255" key="2"/>
<evidence type="ECO:0000305" key="3"/>
<reference key="1">
    <citation type="journal article" date="1991" name="Biochim. Biophys. Acta">
        <title>Primary structures of two subunits of NADH: ubiquinone reductase from Neurospora crassa concerned with NADH-oxidation. Relationship to a soluble NAD-reducing hydrogenase of Alcaligenes eutrophus.</title>
        <authorList>
            <person name="Preis D."/>
            <person name="Weidner U."/>
            <person name="Conzen C."/>
            <person name="Azevedo J.E."/>
            <person name="Nehls U."/>
            <person name="Roehlen D.-A."/>
            <person name="van der Pas J.C."/>
            <person name="Sackmann U."/>
            <person name="Schneider R."/>
            <person name="Werner S."/>
            <person name="Weiss H."/>
        </authorList>
    </citation>
    <scope>NUCLEOTIDE SEQUENCE [MRNA]</scope>
    <source>
        <strain>74-ORS-6a / FGSC 4200</strain>
    </source>
</reference>
<reference key="2">
    <citation type="journal article" date="2003" name="Nucleic Acids Res.">
        <title>What's in the genome of a filamentous fungus? Analysis of the Neurospora genome sequence.</title>
        <authorList>
            <person name="Mannhaupt G."/>
            <person name="Montrone C."/>
            <person name="Haase D."/>
            <person name="Mewes H.-W."/>
            <person name="Aign V."/>
            <person name="Hoheisel J.D."/>
            <person name="Fartmann B."/>
            <person name="Nyakatura G."/>
            <person name="Kempken F."/>
            <person name="Maier J."/>
            <person name="Schulte U."/>
        </authorList>
    </citation>
    <scope>NUCLEOTIDE SEQUENCE [LARGE SCALE GENOMIC DNA]</scope>
    <source>
        <strain>ATCC 24698 / 74-OR23-1A / CBS 708.71 / DSM 1257 / FGSC 987</strain>
    </source>
</reference>
<reference key="3">
    <citation type="journal article" date="2003" name="Nature">
        <title>The genome sequence of the filamentous fungus Neurospora crassa.</title>
        <authorList>
            <person name="Galagan J.E."/>
            <person name="Calvo S.E."/>
            <person name="Borkovich K.A."/>
            <person name="Selker E.U."/>
            <person name="Read N.D."/>
            <person name="Jaffe D.B."/>
            <person name="FitzHugh W."/>
            <person name="Ma L.-J."/>
            <person name="Smirnov S."/>
            <person name="Purcell S."/>
            <person name="Rehman B."/>
            <person name="Elkins T."/>
            <person name="Engels R."/>
            <person name="Wang S."/>
            <person name="Nielsen C.B."/>
            <person name="Butler J."/>
            <person name="Endrizzi M."/>
            <person name="Qui D."/>
            <person name="Ianakiev P."/>
            <person name="Bell-Pedersen D."/>
            <person name="Nelson M.A."/>
            <person name="Werner-Washburne M."/>
            <person name="Selitrennikoff C.P."/>
            <person name="Kinsey J.A."/>
            <person name="Braun E.L."/>
            <person name="Zelter A."/>
            <person name="Schulte U."/>
            <person name="Kothe G.O."/>
            <person name="Jedd G."/>
            <person name="Mewes H.-W."/>
            <person name="Staben C."/>
            <person name="Marcotte E."/>
            <person name="Greenberg D."/>
            <person name="Roy A."/>
            <person name="Foley K."/>
            <person name="Naylor J."/>
            <person name="Stange-Thomann N."/>
            <person name="Barrett R."/>
            <person name="Gnerre S."/>
            <person name="Kamal M."/>
            <person name="Kamvysselis M."/>
            <person name="Mauceli E.W."/>
            <person name="Bielke C."/>
            <person name="Rudd S."/>
            <person name="Frishman D."/>
            <person name="Krystofova S."/>
            <person name="Rasmussen C."/>
            <person name="Metzenberg R.L."/>
            <person name="Perkins D.D."/>
            <person name="Kroken S."/>
            <person name="Cogoni C."/>
            <person name="Macino G."/>
            <person name="Catcheside D.E.A."/>
            <person name="Li W."/>
            <person name="Pratt R.J."/>
            <person name="Osmani S.A."/>
            <person name="DeSouza C.P.C."/>
            <person name="Glass N.L."/>
            <person name="Orbach M.J."/>
            <person name="Berglund J.A."/>
            <person name="Voelker R."/>
            <person name="Yarden O."/>
            <person name="Plamann M."/>
            <person name="Seiler S."/>
            <person name="Dunlap J.C."/>
            <person name="Radford A."/>
            <person name="Aramayo R."/>
            <person name="Natvig D.O."/>
            <person name="Alex L.A."/>
            <person name="Mannhaupt G."/>
            <person name="Ebbole D.J."/>
            <person name="Freitag M."/>
            <person name="Paulsen I."/>
            <person name="Sachs M.S."/>
            <person name="Lander E.S."/>
            <person name="Nusbaum C."/>
            <person name="Birren B.W."/>
        </authorList>
    </citation>
    <scope>NUCLEOTIDE SEQUENCE [LARGE SCALE GENOMIC DNA]</scope>
    <source>
        <strain>ATCC 24698 / 74-OR23-1A / CBS 708.71 / DSM 1257 / FGSC 987</strain>
    </source>
</reference>
<comment type="function">
    <text>Core subunit of the mitochondrial membrane respiratory chain NADH dehydrogenase (Complex I) that is believed to belong to the minimal assembly required for catalysis. Complex I functions in the transfer of electrons from NADH to the respiratory chain. The immediate electron acceptor for the enzyme is believed to be ubiquinone.</text>
</comment>
<comment type="catalytic activity">
    <reaction>
        <text>a ubiquinone + NADH + 5 H(+)(in) = a ubiquinol + NAD(+) + 4 H(+)(out)</text>
        <dbReference type="Rhea" id="RHEA:29091"/>
        <dbReference type="Rhea" id="RHEA-COMP:9565"/>
        <dbReference type="Rhea" id="RHEA-COMP:9566"/>
        <dbReference type="ChEBI" id="CHEBI:15378"/>
        <dbReference type="ChEBI" id="CHEBI:16389"/>
        <dbReference type="ChEBI" id="CHEBI:17976"/>
        <dbReference type="ChEBI" id="CHEBI:57540"/>
        <dbReference type="ChEBI" id="CHEBI:57945"/>
        <dbReference type="EC" id="7.1.1.2"/>
    </reaction>
</comment>
<comment type="cofactor">
    <cofactor evidence="3">
        <name>FMN</name>
        <dbReference type="ChEBI" id="CHEBI:58210"/>
    </cofactor>
    <text evidence="3">Binds 1 FMN.</text>
</comment>
<comment type="cofactor">
    <cofactor evidence="3">
        <name>[4Fe-4S] cluster</name>
        <dbReference type="ChEBI" id="CHEBI:49883"/>
    </cofactor>
    <text evidence="3">Binds 1 [4Fe-4S] cluster.</text>
</comment>
<comment type="subunit">
    <text>Complex I is composed of about 40 different subunits. This is a component of the flavoprotein-sulfur (FP) fragment of the enzyme.</text>
</comment>
<comment type="subcellular location">
    <subcellularLocation>
        <location>Mitochondrion inner membrane</location>
        <topology>Peripheral membrane protein</topology>
        <orientation>Matrix side</orientation>
    </subcellularLocation>
</comment>
<comment type="similarity">
    <text evidence="3">Belongs to the complex I 51 kDa subunit family.</text>
</comment>
<proteinExistence type="evidence at transcript level"/>
<name>NDUV1_NEUCR</name>
<dbReference type="EC" id="7.1.1.2"/>
<dbReference type="EMBL" id="X56227">
    <property type="protein sequence ID" value="CAA39676.1"/>
    <property type="molecule type" value="mRNA"/>
</dbReference>
<dbReference type="EMBL" id="BX897678">
    <property type="protein sequence ID" value="CAE85605.1"/>
    <property type="molecule type" value="Genomic_DNA"/>
</dbReference>
<dbReference type="EMBL" id="CM002241">
    <property type="protein sequence ID" value="EAA28423.1"/>
    <property type="molecule type" value="Genomic_DNA"/>
</dbReference>
<dbReference type="PIR" id="S17663">
    <property type="entry name" value="S17663"/>
</dbReference>
<dbReference type="SMR" id="P24917"/>
<dbReference type="STRING" id="367110.P24917"/>
<dbReference type="TCDB" id="3.D.1.6.2">
    <property type="family name" value="the h+ or na+-translocating nadh dehydrogenase (ndh) family"/>
</dbReference>
<dbReference type="PaxDb" id="5141-EFNCRP00000003696"/>
<dbReference type="EnsemblFungi" id="EAA28423">
    <property type="protein sequence ID" value="EAA28423"/>
    <property type="gene ID" value="NCU04044"/>
</dbReference>
<dbReference type="KEGG" id="ncr:NCU04044"/>
<dbReference type="VEuPathDB" id="FungiDB:NCU04044"/>
<dbReference type="HOGENOM" id="CLU_014881_1_0_1"/>
<dbReference type="InParanoid" id="P24917"/>
<dbReference type="OMA" id="QGDGKPH"/>
<dbReference type="OrthoDB" id="42889at2759"/>
<dbReference type="Proteomes" id="UP000001805">
    <property type="component" value="Chromosome 5, Linkage Group VI"/>
</dbReference>
<dbReference type="GO" id="GO:0005743">
    <property type="term" value="C:mitochondrial inner membrane"/>
    <property type="evidence" value="ECO:0007669"/>
    <property type="project" value="UniProtKB-SubCell"/>
</dbReference>
<dbReference type="GO" id="GO:0051539">
    <property type="term" value="F:4 iron, 4 sulfur cluster binding"/>
    <property type="evidence" value="ECO:0007669"/>
    <property type="project" value="UniProtKB-KW"/>
</dbReference>
<dbReference type="GO" id="GO:0010181">
    <property type="term" value="F:FMN binding"/>
    <property type="evidence" value="ECO:0007669"/>
    <property type="project" value="InterPro"/>
</dbReference>
<dbReference type="GO" id="GO:0046872">
    <property type="term" value="F:metal ion binding"/>
    <property type="evidence" value="ECO:0007669"/>
    <property type="project" value="UniProtKB-KW"/>
</dbReference>
<dbReference type="GO" id="GO:0051287">
    <property type="term" value="F:NAD binding"/>
    <property type="evidence" value="ECO:0007669"/>
    <property type="project" value="InterPro"/>
</dbReference>
<dbReference type="GO" id="GO:0008137">
    <property type="term" value="F:NADH dehydrogenase (ubiquinone) activity"/>
    <property type="evidence" value="ECO:0007669"/>
    <property type="project" value="UniProtKB-EC"/>
</dbReference>
<dbReference type="FunFam" id="1.20.1440.230:FF:000001">
    <property type="entry name" value="Mitochondrial NADH dehydrogenase flavoprotein 1"/>
    <property type="match status" value="1"/>
</dbReference>
<dbReference type="FunFam" id="3.10.20.600:FF:000001">
    <property type="entry name" value="NADH dehydrogenase [ubiquinone] flavoprotein 1, mitochondrial"/>
    <property type="match status" value="1"/>
</dbReference>
<dbReference type="FunFam" id="3.40.50.11540:FF:000001">
    <property type="entry name" value="NADH dehydrogenase [ubiquinone] flavoprotein 1, mitochondrial"/>
    <property type="match status" value="1"/>
</dbReference>
<dbReference type="Gene3D" id="3.10.20.600">
    <property type="match status" value="1"/>
</dbReference>
<dbReference type="Gene3D" id="3.40.50.11540">
    <property type="entry name" value="NADH-ubiquinone oxidoreductase 51kDa subunit"/>
    <property type="match status" value="1"/>
</dbReference>
<dbReference type="Gene3D" id="1.20.1440.230">
    <property type="entry name" value="NADH-ubiquinone oxidoreductase 51kDa subunit, iron-sulphur binding domain"/>
    <property type="match status" value="1"/>
</dbReference>
<dbReference type="InterPro" id="IPR050837">
    <property type="entry name" value="ComplexI_51kDa_subunit"/>
</dbReference>
<dbReference type="InterPro" id="IPR001949">
    <property type="entry name" value="NADH-UbQ_OxRdtase_51kDa_CS"/>
</dbReference>
<dbReference type="InterPro" id="IPR011537">
    <property type="entry name" value="NADH-UbQ_OxRdtase_suF"/>
</dbReference>
<dbReference type="InterPro" id="IPR011538">
    <property type="entry name" value="Nuo51_FMN-bd"/>
</dbReference>
<dbReference type="InterPro" id="IPR037225">
    <property type="entry name" value="Nuo51_FMN-bd_sf"/>
</dbReference>
<dbReference type="InterPro" id="IPR019575">
    <property type="entry name" value="Nuop51_4Fe4S-bd"/>
</dbReference>
<dbReference type="InterPro" id="IPR037207">
    <property type="entry name" value="Nuop51_4Fe4S-bd_sf"/>
</dbReference>
<dbReference type="InterPro" id="IPR054765">
    <property type="entry name" value="SLBB_dom"/>
</dbReference>
<dbReference type="NCBIfam" id="TIGR01959">
    <property type="entry name" value="nuoF_fam"/>
    <property type="match status" value="1"/>
</dbReference>
<dbReference type="NCBIfam" id="NF010120">
    <property type="entry name" value="PRK13596.1"/>
    <property type="match status" value="1"/>
</dbReference>
<dbReference type="PANTHER" id="PTHR11780:SF10">
    <property type="entry name" value="NADH DEHYDROGENASE [UBIQUINONE] FLAVOPROTEIN 1, MITOCHONDRIAL"/>
    <property type="match status" value="1"/>
</dbReference>
<dbReference type="PANTHER" id="PTHR11780">
    <property type="entry name" value="NADH-UBIQUINONE OXIDOREDUCTASE FLAVOPROTEIN 1 NDUFV1"/>
    <property type="match status" value="1"/>
</dbReference>
<dbReference type="Pfam" id="PF01512">
    <property type="entry name" value="Complex1_51K"/>
    <property type="match status" value="1"/>
</dbReference>
<dbReference type="Pfam" id="PF10589">
    <property type="entry name" value="NADH_4Fe-4S"/>
    <property type="match status" value="1"/>
</dbReference>
<dbReference type="Pfam" id="PF22461">
    <property type="entry name" value="SLBB_2"/>
    <property type="match status" value="1"/>
</dbReference>
<dbReference type="SMART" id="SM00928">
    <property type="entry name" value="NADH_4Fe-4S"/>
    <property type="match status" value="1"/>
</dbReference>
<dbReference type="SUPFAM" id="SSF142019">
    <property type="entry name" value="Nqo1 FMN-binding domain-like"/>
    <property type="match status" value="1"/>
</dbReference>
<dbReference type="SUPFAM" id="SSF142984">
    <property type="entry name" value="Nqo1 middle domain-like"/>
    <property type="match status" value="1"/>
</dbReference>
<dbReference type="SUPFAM" id="SSF140490">
    <property type="entry name" value="Nqo1C-terminal domain-like"/>
    <property type="match status" value="1"/>
</dbReference>
<dbReference type="PROSITE" id="PS00644">
    <property type="entry name" value="COMPLEX1_51K_1"/>
    <property type="match status" value="1"/>
</dbReference>
<dbReference type="PROSITE" id="PS00645">
    <property type="entry name" value="COMPLEX1_51K_2"/>
    <property type="match status" value="1"/>
</dbReference>
<protein>
    <recommendedName>
        <fullName>NADH-ubiquinone oxidoreductase 51 kDa subunit, mitochondrial</fullName>
        <ecNumber>7.1.1.2</ecNumber>
    </recommendedName>
    <alternativeName>
        <fullName>Complex I-51kD</fullName>
        <shortName>CI-51kD</shortName>
    </alternativeName>
</protein>
<organism>
    <name type="scientific">Neurospora crassa (strain ATCC 24698 / 74-OR23-1A / CBS 708.71 / DSM 1257 / FGSC 987)</name>
    <dbReference type="NCBI Taxonomy" id="367110"/>
    <lineage>
        <taxon>Eukaryota</taxon>
        <taxon>Fungi</taxon>
        <taxon>Dikarya</taxon>
        <taxon>Ascomycota</taxon>
        <taxon>Pezizomycotina</taxon>
        <taxon>Sordariomycetes</taxon>
        <taxon>Sordariomycetidae</taxon>
        <taxon>Sordariales</taxon>
        <taxon>Sordariaceae</taxon>
        <taxon>Neurospora</taxon>
    </lineage>
</organism>
<keyword id="KW-0004">4Fe-4S</keyword>
<keyword id="KW-0249">Electron transport</keyword>
<keyword id="KW-0285">Flavoprotein</keyword>
<keyword id="KW-0288">FMN</keyword>
<keyword id="KW-0408">Iron</keyword>
<keyword id="KW-0411">Iron-sulfur</keyword>
<keyword id="KW-0472">Membrane</keyword>
<keyword id="KW-0479">Metal-binding</keyword>
<keyword id="KW-0496">Mitochondrion</keyword>
<keyword id="KW-0999">Mitochondrion inner membrane</keyword>
<keyword id="KW-0520">NAD</keyword>
<keyword id="KW-0560">Oxidoreductase</keyword>
<keyword id="KW-1185">Reference proteome</keyword>
<keyword id="KW-0679">Respiratory chain</keyword>
<keyword id="KW-0809">Transit peptide</keyword>
<keyword id="KW-1278">Translocase</keyword>
<keyword id="KW-0813">Transport</keyword>
<keyword id="KW-0830">Ubiquinone</keyword>
<sequence length="493" mass="54241">MLSRTAAPTKASARTLSRAAAEQCRTFATVQDGSANPVRHYGGLKDQDRIFQNLYGRYPPDLKHAKKMGDWHKTKEILLKGHDWIIGEVKASGLRGRGGAGFPSGLKWSFMNFKDWDKDDKPRYLVVNADEGEPGTCKDREIMRKDPHKLVEGCLVAGRAMNATAAYIYIRGEFIQEAAILQNAINEAYADGLIGKNACGSGYDFDVYLHRGAGAYVCGEETSLIESLEGKPGKPRLKPPFPAAVGLFGCPSTVANVETVAVAPTICRRGGNWFAGFGRERNQGTKLFCISGHVNNPCTVEEEMSIPMRELIDKHCGGVRGGWDNLLAVIPGGSSTPILPKHICDTQLMDFDALKDSQSGLGTAALIVMDKSTDVVRAISRLSHFYRHESCGQCTPCREGSKWTEQIMKRFEKGQGREREIDMLQELTKQVEGHTICALGEAFAWPIQGLIRHFRPELEARIRKFAQENGGEALAGGWQRNARQQGKLVSPGM</sequence>
<accession>P24917</accession>
<accession>Q7RV82</accession>
<feature type="transit peptide" description="Mitochondrion">
    <location>
        <begin position="1"/>
        <end position="27"/>
    </location>
</feature>
<feature type="chain" id="PRO_0000019980" description="NADH-ubiquinone oxidoreductase 51 kDa subunit, mitochondrial">
    <location>
        <begin position="28"/>
        <end position="493"/>
    </location>
</feature>
<feature type="binding site" evidence="1">
    <location>
        <begin position="96"/>
        <end position="105"/>
    </location>
    <ligand>
        <name>NAD(+)</name>
        <dbReference type="ChEBI" id="CHEBI:57540"/>
    </ligand>
</feature>
<feature type="binding site" evidence="1">
    <location>
        <begin position="212"/>
        <end position="259"/>
    </location>
    <ligand>
        <name>FMN</name>
        <dbReference type="ChEBI" id="CHEBI:58210"/>
    </ligand>
</feature>
<feature type="binding site" evidence="2">
    <location>
        <position position="391"/>
    </location>
    <ligand>
        <name>[4Fe-4S] cluster</name>
        <dbReference type="ChEBI" id="CHEBI:49883"/>
    </ligand>
</feature>
<feature type="binding site" evidence="2">
    <location>
        <position position="394"/>
    </location>
    <ligand>
        <name>[4Fe-4S] cluster</name>
        <dbReference type="ChEBI" id="CHEBI:49883"/>
    </ligand>
</feature>
<feature type="binding site" evidence="2">
    <location>
        <position position="397"/>
    </location>
    <ligand>
        <name>[4Fe-4S] cluster</name>
        <dbReference type="ChEBI" id="CHEBI:49883"/>
    </ligand>
</feature>
<feature type="binding site" evidence="2">
    <location>
        <position position="437"/>
    </location>
    <ligand>
        <name>[4Fe-4S] cluster</name>
        <dbReference type="ChEBI" id="CHEBI:49883"/>
    </ligand>
</feature>
<feature type="sequence conflict" description="In Ref. 1; CAA39676." evidence="3" ref="1">
    <original>VA</original>
    <variation>AV</variation>
    <location>
        <begin position="260"/>
        <end position="261"/>
    </location>
</feature>
<feature type="sequence conflict" description="In Ref. 1; CAA39676." evidence="3" ref="1">
    <original>A</original>
    <variation>R</variation>
    <location>
        <position position="442"/>
    </location>
</feature>